<sequence length="363" mass="38263">MKVLAAMSGGVDSSVAAARMVDAGHDVVGVHLALSTAPGALRTGSRGCCSKEDASDARRVADVLGIPFYVWDFAERFKEDVIDDFVSSYARGETPNPCIRCNQRIKFSALYAKALALGFDVVVTGHYARLSEGRLRRAVDQDKDQSYVLAVLTAEQLRHAMFPIGDTPKPQIREEASRRGLAVADKPDSHDICFIPSGNTQTFLGERIGVRRGTVVDAAGAVLATHDGVHGFTIGQRKGLGIPGPGPDGRPRYVTAIDAETGTVRVGDVADLQVHALTGRAPIFTAGTAPTGPLECAVQVRAHGETTSAVAELVGDELSVRLHSPLRGVARGQTLVLYRPDPDGDEVLGSATITATSACSPVS</sequence>
<reference key="1">
    <citation type="journal article" date="2008" name="Genome Res.">
        <title>Insights from the complete genome sequence of Mycobacterium marinum on the evolution of Mycobacterium tuberculosis.</title>
        <authorList>
            <person name="Stinear T.P."/>
            <person name="Seemann T."/>
            <person name="Harrison P.F."/>
            <person name="Jenkin G.A."/>
            <person name="Davies J.K."/>
            <person name="Johnson P.D."/>
            <person name="Abdellah Z."/>
            <person name="Arrowsmith C."/>
            <person name="Chillingworth T."/>
            <person name="Churcher C."/>
            <person name="Clarke K."/>
            <person name="Cronin A."/>
            <person name="Davis P."/>
            <person name="Goodhead I."/>
            <person name="Holroyd N."/>
            <person name="Jagels K."/>
            <person name="Lord A."/>
            <person name="Moule S."/>
            <person name="Mungall K."/>
            <person name="Norbertczak H."/>
            <person name="Quail M.A."/>
            <person name="Rabbinowitsch E."/>
            <person name="Walker D."/>
            <person name="White B."/>
            <person name="Whitehead S."/>
            <person name="Small P.L."/>
            <person name="Brosch R."/>
            <person name="Ramakrishnan L."/>
            <person name="Fischbach M.A."/>
            <person name="Parkhill J."/>
            <person name="Cole S.T."/>
        </authorList>
    </citation>
    <scope>NUCLEOTIDE SEQUENCE [LARGE SCALE GENOMIC DNA]</scope>
    <source>
        <strain>ATCC BAA-535 / M</strain>
    </source>
</reference>
<gene>
    <name evidence="1" type="primary">mnmA</name>
    <name type="ordered locus">MMAR_1690</name>
</gene>
<keyword id="KW-0067">ATP-binding</keyword>
<keyword id="KW-0963">Cytoplasm</keyword>
<keyword id="KW-1015">Disulfide bond</keyword>
<keyword id="KW-0547">Nucleotide-binding</keyword>
<keyword id="KW-1185">Reference proteome</keyword>
<keyword id="KW-0694">RNA-binding</keyword>
<keyword id="KW-0808">Transferase</keyword>
<keyword id="KW-0819">tRNA processing</keyword>
<keyword id="KW-0820">tRNA-binding</keyword>
<accession>B2HIE6</accession>
<feature type="chain" id="PRO_0000349704" description="tRNA-specific 2-thiouridylase MnmA">
    <location>
        <begin position="1"/>
        <end position="363"/>
    </location>
</feature>
<feature type="region of interest" description="Interaction with tRNA" evidence="1">
    <location>
        <begin position="143"/>
        <end position="145"/>
    </location>
</feature>
<feature type="active site" description="Nucleophile" evidence="1">
    <location>
        <position position="101"/>
    </location>
</feature>
<feature type="active site" description="Cysteine persulfide intermediate" evidence="1">
    <location>
        <position position="193"/>
    </location>
</feature>
<feature type="binding site" evidence="1">
    <location>
        <begin position="6"/>
        <end position="13"/>
    </location>
    <ligand>
        <name>ATP</name>
        <dbReference type="ChEBI" id="CHEBI:30616"/>
    </ligand>
</feature>
<feature type="binding site" evidence="1">
    <location>
        <position position="32"/>
    </location>
    <ligand>
        <name>ATP</name>
        <dbReference type="ChEBI" id="CHEBI:30616"/>
    </ligand>
</feature>
<feature type="binding site" evidence="1">
    <location>
        <position position="125"/>
    </location>
    <ligand>
        <name>ATP</name>
        <dbReference type="ChEBI" id="CHEBI:30616"/>
    </ligand>
</feature>
<feature type="site" description="Interaction with tRNA" evidence="1">
    <location>
        <position position="126"/>
    </location>
</feature>
<feature type="site" description="Interaction with tRNA" evidence="1">
    <location>
        <position position="333"/>
    </location>
</feature>
<feature type="disulfide bond" description="Alternate" evidence="1">
    <location>
        <begin position="101"/>
        <end position="193"/>
    </location>
</feature>
<dbReference type="EC" id="2.8.1.13" evidence="1"/>
<dbReference type="EMBL" id="CP000854">
    <property type="protein sequence ID" value="ACC40140.1"/>
    <property type="status" value="ALT_INIT"/>
    <property type="molecule type" value="Genomic_DNA"/>
</dbReference>
<dbReference type="RefSeq" id="WP_011740003.1">
    <property type="nucleotide sequence ID" value="NC_010612.1"/>
</dbReference>
<dbReference type="SMR" id="B2HIE6"/>
<dbReference type="STRING" id="216594.MMAR_1690"/>
<dbReference type="GeneID" id="34342046"/>
<dbReference type="KEGG" id="mmi:MMAR_1690"/>
<dbReference type="eggNOG" id="COG0482">
    <property type="taxonomic scope" value="Bacteria"/>
</dbReference>
<dbReference type="HOGENOM" id="CLU_035188_0_2_11"/>
<dbReference type="OrthoDB" id="9800696at2"/>
<dbReference type="Proteomes" id="UP000001190">
    <property type="component" value="Chromosome"/>
</dbReference>
<dbReference type="GO" id="GO:0005737">
    <property type="term" value="C:cytoplasm"/>
    <property type="evidence" value="ECO:0007669"/>
    <property type="project" value="UniProtKB-SubCell"/>
</dbReference>
<dbReference type="GO" id="GO:0005524">
    <property type="term" value="F:ATP binding"/>
    <property type="evidence" value="ECO:0007669"/>
    <property type="project" value="UniProtKB-KW"/>
</dbReference>
<dbReference type="GO" id="GO:0000049">
    <property type="term" value="F:tRNA binding"/>
    <property type="evidence" value="ECO:0007669"/>
    <property type="project" value="UniProtKB-KW"/>
</dbReference>
<dbReference type="GO" id="GO:0103016">
    <property type="term" value="F:tRNA-uridine 2-sulfurtransferase activity"/>
    <property type="evidence" value="ECO:0007669"/>
    <property type="project" value="UniProtKB-EC"/>
</dbReference>
<dbReference type="GO" id="GO:0002143">
    <property type="term" value="P:tRNA wobble position uridine thiolation"/>
    <property type="evidence" value="ECO:0007669"/>
    <property type="project" value="TreeGrafter"/>
</dbReference>
<dbReference type="CDD" id="cd01998">
    <property type="entry name" value="MnmA_TRMU-like"/>
    <property type="match status" value="1"/>
</dbReference>
<dbReference type="FunFam" id="3.40.50.620:FF:000057">
    <property type="entry name" value="tRNA-specific 2-thiouridylase MnmA"/>
    <property type="match status" value="1"/>
</dbReference>
<dbReference type="Gene3D" id="2.30.30.280">
    <property type="entry name" value="Adenine nucleotide alpha hydrolases-like domains"/>
    <property type="match status" value="1"/>
</dbReference>
<dbReference type="Gene3D" id="3.40.50.620">
    <property type="entry name" value="HUPs"/>
    <property type="match status" value="1"/>
</dbReference>
<dbReference type="Gene3D" id="2.40.30.10">
    <property type="entry name" value="Translation factors"/>
    <property type="match status" value="1"/>
</dbReference>
<dbReference type="HAMAP" id="MF_00144">
    <property type="entry name" value="tRNA_thiouridyl_MnmA"/>
    <property type="match status" value="1"/>
</dbReference>
<dbReference type="InterPro" id="IPR004506">
    <property type="entry name" value="MnmA-like"/>
</dbReference>
<dbReference type="InterPro" id="IPR046885">
    <property type="entry name" value="MnmA-like_C"/>
</dbReference>
<dbReference type="InterPro" id="IPR046884">
    <property type="entry name" value="MnmA-like_central"/>
</dbReference>
<dbReference type="InterPro" id="IPR023382">
    <property type="entry name" value="MnmA-like_central_sf"/>
</dbReference>
<dbReference type="InterPro" id="IPR014729">
    <property type="entry name" value="Rossmann-like_a/b/a_fold"/>
</dbReference>
<dbReference type="NCBIfam" id="NF001138">
    <property type="entry name" value="PRK00143.1"/>
    <property type="match status" value="1"/>
</dbReference>
<dbReference type="NCBIfam" id="TIGR00420">
    <property type="entry name" value="trmU"/>
    <property type="match status" value="1"/>
</dbReference>
<dbReference type="PANTHER" id="PTHR11933:SF5">
    <property type="entry name" value="MITOCHONDRIAL TRNA-SPECIFIC 2-THIOURIDYLASE 1"/>
    <property type="match status" value="1"/>
</dbReference>
<dbReference type="PANTHER" id="PTHR11933">
    <property type="entry name" value="TRNA 5-METHYLAMINOMETHYL-2-THIOURIDYLATE -METHYLTRANSFERASE"/>
    <property type="match status" value="1"/>
</dbReference>
<dbReference type="Pfam" id="PF03054">
    <property type="entry name" value="tRNA_Me_trans"/>
    <property type="match status" value="1"/>
</dbReference>
<dbReference type="Pfam" id="PF20258">
    <property type="entry name" value="tRNA_Me_trans_C"/>
    <property type="match status" value="1"/>
</dbReference>
<dbReference type="Pfam" id="PF20259">
    <property type="entry name" value="tRNA_Me_trans_M"/>
    <property type="match status" value="1"/>
</dbReference>
<dbReference type="SUPFAM" id="SSF52402">
    <property type="entry name" value="Adenine nucleotide alpha hydrolases-like"/>
    <property type="match status" value="1"/>
</dbReference>
<evidence type="ECO:0000255" key="1">
    <source>
        <dbReference type="HAMAP-Rule" id="MF_00144"/>
    </source>
</evidence>
<evidence type="ECO:0000305" key="2"/>
<protein>
    <recommendedName>
        <fullName evidence="1">tRNA-specific 2-thiouridylase MnmA</fullName>
        <ecNumber evidence="1">2.8.1.13</ecNumber>
    </recommendedName>
</protein>
<name>MNMA_MYCMM</name>
<comment type="function">
    <text evidence="1">Catalyzes the 2-thiolation of uridine at the wobble position (U34) of tRNA, leading to the formation of s(2)U34.</text>
</comment>
<comment type="catalytic activity">
    <reaction evidence="1">
        <text>S-sulfanyl-L-cysteinyl-[protein] + uridine(34) in tRNA + AH2 + ATP = 2-thiouridine(34) in tRNA + L-cysteinyl-[protein] + A + AMP + diphosphate + H(+)</text>
        <dbReference type="Rhea" id="RHEA:47032"/>
        <dbReference type="Rhea" id="RHEA-COMP:10131"/>
        <dbReference type="Rhea" id="RHEA-COMP:11726"/>
        <dbReference type="Rhea" id="RHEA-COMP:11727"/>
        <dbReference type="Rhea" id="RHEA-COMP:11728"/>
        <dbReference type="ChEBI" id="CHEBI:13193"/>
        <dbReference type="ChEBI" id="CHEBI:15378"/>
        <dbReference type="ChEBI" id="CHEBI:17499"/>
        <dbReference type="ChEBI" id="CHEBI:29950"/>
        <dbReference type="ChEBI" id="CHEBI:30616"/>
        <dbReference type="ChEBI" id="CHEBI:33019"/>
        <dbReference type="ChEBI" id="CHEBI:61963"/>
        <dbReference type="ChEBI" id="CHEBI:65315"/>
        <dbReference type="ChEBI" id="CHEBI:87170"/>
        <dbReference type="ChEBI" id="CHEBI:456215"/>
        <dbReference type="EC" id="2.8.1.13"/>
    </reaction>
</comment>
<comment type="subcellular location">
    <subcellularLocation>
        <location evidence="1">Cytoplasm</location>
    </subcellularLocation>
</comment>
<comment type="similarity">
    <text evidence="1">Belongs to the MnmA/TRMU family.</text>
</comment>
<comment type="sequence caution" evidence="2">
    <conflict type="erroneous initiation">
        <sequence resource="EMBL-CDS" id="ACC40140"/>
    </conflict>
</comment>
<proteinExistence type="inferred from homology"/>
<organism>
    <name type="scientific">Mycobacterium marinum (strain ATCC BAA-535 / M)</name>
    <dbReference type="NCBI Taxonomy" id="216594"/>
    <lineage>
        <taxon>Bacteria</taxon>
        <taxon>Bacillati</taxon>
        <taxon>Actinomycetota</taxon>
        <taxon>Actinomycetes</taxon>
        <taxon>Mycobacteriales</taxon>
        <taxon>Mycobacteriaceae</taxon>
        <taxon>Mycobacterium</taxon>
        <taxon>Mycobacterium ulcerans group</taxon>
    </lineage>
</organism>